<dbReference type="EC" id="1.1.1.17" evidence="1"/>
<dbReference type="EMBL" id="CP000510">
    <property type="protein sequence ID" value="ABM01963.1"/>
    <property type="molecule type" value="Genomic_DNA"/>
</dbReference>
<dbReference type="RefSeq" id="WP_011768522.1">
    <property type="nucleotide sequence ID" value="NC_008709.1"/>
</dbReference>
<dbReference type="SMR" id="A1SR48"/>
<dbReference type="STRING" id="357804.Ping_0089"/>
<dbReference type="KEGG" id="pin:Ping_0089"/>
<dbReference type="eggNOG" id="COG0246">
    <property type="taxonomic scope" value="Bacteria"/>
</dbReference>
<dbReference type="HOGENOM" id="CLU_036089_2_0_6"/>
<dbReference type="OrthoDB" id="271711at2"/>
<dbReference type="Proteomes" id="UP000000639">
    <property type="component" value="Chromosome"/>
</dbReference>
<dbReference type="GO" id="GO:0005829">
    <property type="term" value="C:cytosol"/>
    <property type="evidence" value="ECO:0007669"/>
    <property type="project" value="TreeGrafter"/>
</dbReference>
<dbReference type="GO" id="GO:0008926">
    <property type="term" value="F:mannitol-1-phosphate 5-dehydrogenase activity"/>
    <property type="evidence" value="ECO:0007669"/>
    <property type="project" value="UniProtKB-UniRule"/>
</dbReference>
<dbReference type="GO" id="GO:0019592">
    <property type="term" value="P:mannitol catabolic process"/>
    <property type="evidence" value="ECO:0007669"/>
    <property type="project" value="TreeGrafter"/>
</dbReference>
<dbReference type="FunFam" id="1.10.1040.10:FF:000009">
    <property type="entry name" value="Mannitol-1-phosphate 5-dehydrogenase"/>
    <property type="match status" value="1"/>
</dbReference>
<dbReference type="FunFam" id="3.40.50.720:FF:000075">
    <property type="entry name" value="Mannitol-1-phosphate 5-dehydrogenase"/>
    <property type="match status" value="1"/>
</dbReference>
<dbReference type="Gene3D" id="1.10.1040.10">
    <property type="entry name" value="N-(1-d-carboxylethyl)-l-norvaline Dehydrogenase, domain 2"/>
    <property type="match status" value="1"/>
</dbReference>
<dbReference type="Gene3D" id="3.40.50.720">
    <property type="entry name" value="NAD(P)-binding Rossmann-like Domain"/>
    <property type="match status" value="1"/>
</dbReference>
<dbReference type="HAMAP" id="MF_00196">
    <property type="entry name" value="Mannitol_dehydrog"/>
    <property type="match status" value="1"/>
</dbReference>
<dbReference type="InterPro" id="IPR008927">
    <property type="entry name" value="6-PGluconate_DH-like_C_sf"/>
</dbReference>
<dbReference type="InterPro" id="IPR013328">
    <property type="entry name" value="6PGD_dom2"/>
</dbReference>
<dbReference type="InterPro" id="IPR023028">
    <property type="entry name" value="Mannitol_1_phos_5_DH"/>
</dbReference>
<dbReference type="InterPro" id="IPR000669">
    <property type="entry name" value="Mannitol_DH"/>
</dbReference>
<dbReference type="InterPro" id="IPR013118">
    <property type="entry name" value="Mannitol_DH_C"/>
</dbReference>
<dbReference type="InterPro" id="IPR023027">
    <property type="entry name" value="Mannitol_DH_CS"/>
</dbReference>
<dbReference type="InterPro" id="IPR013131">
    <property type="entry name" value="Mannitol_DH_N"/>
</dbReference>
<dbReference type="InterPro" id="IPR036291">
    <property type="entry name" value="NAD(P)-bd_dom_sf"/>
</dbReference>
<dbReference type="NCBIfam" id="NF002646">
    <property type="entry name" value="PRK02318.1-2"/>
    <property type="match status" value="1"/>
</dbReference>
<dbReference type="NCBIfam" id="NF002647">
    <property type="entry name" value="PRK02318.1-3"/>
    <property type="match status" value="1"/>
</dbReference>
<dbReference type="NCBIfam" id="NF002650">
    <property type="entry name" value="PRK02318.2-2"/>
    <property type="match status" value="1"/>
</dbReference>
<dbReference type="NCBIfam" id="NF002652">
    <property type="entry name" value="PRK02318.2-5"/>
    <property type="match status" value="1"/>
</dbReference>
<dbReference type="PANTHER" id="PTHR30524:SF0">
    <property type="entry name" value="ALTRONATE OXIDOREDUCTASE-RELATED"/>
    <property type="match status" value="1"/>
</dbReference>
<dbReference type="PANTHER" id="PTHR30524">
    <property type="entry name" value="MANNITOL-1-PHOSPHATE 5-DEHYDROGENASE"/>
    <property type="match status" value="1"/>
</dbReference>
<dbReference type="Pfam" id="PF01232">
    <property type="entry name" value="Mannitol_dh"/>
    <property type="match status" value="1"/>
</dbReference>
<dbReference type="Pfam" id="PF08125">
    <property type="entry name" value="Mannitol_dh_C"/>
    <property type="match status" value="1"/>
</dbReference>
<dbReference type="PRINTS" id="PR00084">
    <property type="entry name" value="MTLDHDRGNASE"/>
</dbReference>
<dbReference type="SUPFAM" id="SSF48179">
    <property type="entry name" value="6-phosphogluconate dehydrogenase C-terminal domain-like"/>
    <property type="match status" value="1"/>
</dbReference>
<dbReference type="SUPFAM" id="SSF51735">
    <property type="entry name" value="NAD(P)-binding Rossmann-fold domains"/>
    <property type="match status" value="1"/>
</dbReference>
<dbReference type="PROSITE" id="PS00974">
    <property type="entry name" value="MANNITOL_DHGENASE"/>
    <property type="match status" value="1"/>
</dbReference>
<protein>
    <recommendedName>
        <fullName evidence="1">Mannitol-1-phosphate 5-dehydrogenase</fullName>
        <ecNumber evidence="1">1.1.1.17</ecNumber>
    </recommendedName>
</protein>
<name>MTLD_PSYIN</name>
<feature type="chain" id="PRO_1000011807" description="Mannitol-1-phosphate 5-dehydrogenase">
    <location>
        <begin position="1"/>
        <end position="382"/>
    </location>
</feature>
<feature type="binding site" evidence="1">
    <location>
        <begin position="3"/>
        <end position="14"/>
    </location>
    <ligand>
        <name>NAD(+)</name>
        <dbReference type="ChEBI" id="CHEBI:57540"/>
    </ligand>
</feature>
<proteinExistence type="inferred from homology"/>
<sequence>MKAIHFGAGNIGRGFIGKVLSDAGIKVTFADVNKTVVNALIARNEYDVNVVGADCVVEKVTNVTAVNSAGSEIVKLIAESDLVTTAVGPTVLNIIAKTIADAIELRLNSGNKFPLNIIACENMVRGTSQLKAQVFKYLPESLHVQSDQTIGFVDCAVDRIVPPAEAGETDPLAVTVETFSEWIVDQTQFKGEIPTIKGMECTDNLMAFVERKLFTLNTGHLITAYLGVLAGYETIKESIEDEAIRSDVTAAMQESGEVLIRRYGFDPQAHAAYIQKILGRFANPYLRDEVDRVGRQPIRKLSANDRLIKPLNGTLEYGLPNGHLIKGIAAAFLYKNDQDPQAVELQAMFAEKGLAATLAHYSGLAVDSETVKLVEQAYQSLK</sequence>
<evidence type="ECO:0000255" key="1">
    <source>
        <dbReference type="HAMAP-Rule" id="MF_00196"/>
    </source>
</evidence>
<gene>
    <name evidence="1" type="primary">mtlD</name>
    <name type="ordered locus">Ping_0089</name>
</gene>
<comment type="catalytic activity">
    <reaction evidence="1">
        <text>D-mannitol 1-phosphate + NAD(+) = beta-D-fructose 6-phosphate + NADH + H(+)</text>
        <dbReference type="Rhea" id="RHEA:19661"/>
        <dbReference type="ChEBI" id="CHEBI:15378"/>
        <dbReference type="ChEBI" id="CHEBI:57540"/>
        <dbReference type="ChEBI" id="CHEBI:57634"/>
        <dbReference type="ChEBI" id="CHEBI:57945"/>
        <dbReference type="ChEBI" id="CHEBI:61381"/>
        <dbReference type="EC" id="1.1.1.17"/>
    </reaction>
</comment>
<comment type="similarity">
    <text evidence="1">Belongs to the mannitol dehydrogenase family.</text>
</comment>
<accession>A1SR48</accession>
<reference key="1">
    <citation type="journal article" date="2008" name="BMC Genomics">
        <title>Genomics of an extreme psychrophile, Psychromonas ingrahamii.</title>
        <authorList>
            <person name="Riley M."/>
            <person name="Staley J.T."/>
            <person name="Danchin A."/>
            <person name="Wang T.Z."/>
            <person name="Brettin T.S."/>
            <person name="Hauser L.J."/>
            <person name="Land M.L."/>
            <person name="Thompson L.S."/>
        </authorList>
    </citation>
    <scope>NUCLEOTIDE SEQUENCE [LARGE SCALE GENOMIC DNA]</scope>
    <source>
        <strain>DSM 17664 / CCUG 51855 / 37</strain>
    </source>
</reference>
<keyword id="KW-0520">NAD</keyword>
<keyword id="KW-0560">Oxidoreductase</keyword>
<keyword id="KW-1185">Reference proteome</keyword>
<organism>
    <name type="scientific">Psychromonas ingrahamii (strain DSM 17664 / CCUG 51855 / 37)</name>
    <dbReference type="NCBI Taxonomy" id="357804"/>
    <lineage>
        <taxon>Bacteria</taxon>
        <taxon>Pseudomonadati</taxon>
        <taxon>Pseudomonadota</taxon>
        <taxon>Gammaproteobacteria</taxon>
        <taxon>Alteromonadales</taxon>
        <taxon>Psychromonadaceae</taxon>
        <taxon>Psychromonas</taxon>
    </lineage>
</organism>